<proteinExistence type="evidence at protein level"/>
<evidence type="ECO:0000255" key="1"/>
<evidence type="ECO:0000269" key="2">
    <source>
    </source>
</evidence>
<evidence type="ECO:0000305" key="3"/>
<organism>
    <name type="scientific">Escherichia coli (strain K12)</name>
    <dbReference type="NCBI Taxonomy" id="83333"/>
    <lineage>
        <taxon>Bacteria</taxon>
        <taxon>Pseudomonadati</taxon>
        <taxon>Pseudomonadota</taxon>
        <taxon>Gammaproteobacteria</taxon>
        <taxon>Enterobacterales</taxon>
        <taxon>Enterobacteriaceae</taxon>
        <taxon>Escherichia</taxon>
    </lineage>
</organism>
<comment type="function">
    <text evidence="2">(Microbial infection) Allows N4 phage attachment by binding to the viral non-contractile sheath protein.</text>
</comment>
<comment type="subunit">
    <text evidence="2">(Microbial infection) Interacts with N4 phage non-contractile sheath protein; this interaction is essential for viral adsorption to the host.</text>
</comment>
<comment type="subcellular location">
    <subcellularLocation>
        <location>Cell outer membrane</location>
    </subcellularLocation>
</comment>
<sequence length="990" mass="111308">MKENNLNRVIGWSGLLLTSLLSTSALADNIGTSAEELGLSDYRHFVIYPRLDKALKAQKNNDEATAIREFEYIHQQVPDNIPLTLYLAEAYRHFGHDDRARLLLEDQLKRHPGDARLERSLAAIPVEVKSVTTVEELLAQQKACDAAPTLRCRSEVGQNALRLAQLPVARAQLNDATFAASPEGKTLRTDLLQRAIYLKQWSQADTLYNEARQQNTLSAAERRQWFDVLLAGQLDDRILALQSQGIFTDPQSYITYATALAYRGEKARLQHYLIENKPLFTTDAQEKSWLYLLSKYSANPVQALANYTVQFADNRQYVVGATLPVLLKEGQYDAAQKLLATLPANEMLEERYAVSVATRNKAEALRLARLLYQQEPANLTRLDQLTWQLMQNEQSREAADLLLQRYPFQGDARVSQTLMARLASLLESHPYLATPAKVAILSKPLPLAEQRQWQSQLPGIADNCPAIVRLLGDMSPSYDAAAWNRLAKCYRDTLPGVALYAWLQAEQRQPSAWQHRAVAYQAYQVEDYATALAAWQKISLHDMSNEDLLAAANTAQAAGNGAARDRWLQQAEKRGLGSNALYWWLHAQRYIPGQPELALNDLTRSINIAPSANAYVARATIYRQRHNVPAAVSDLRAALELEPNNSNTQAALGYALWDSGDIAQSREMLEPAHKGLPDDPALIRQLAYVNQRLDDMPATQHYARLVIDDIDNQALITPLTPEQNQQRFNFRRLHEEVGRRWTFSFDSSIGLRSGAMSTANNNVGGAAPGKSYRSYGQLEAEYRIGRNMLLEGDLLSVYSRVFADTGENGVMMPVKNPMSGTGLRWKPLRDQIFFIAVEQQLPLNGQNGASDTMLRASASFFNGGKYSDEWHPNGSGWFAQNLYLDAAQYIRQDIQAWTADYRVSWHQKVANGQTIEPYAHVQDNGYRDKGTQGAQLGGVGVRWNIWTGETHYDAWPHKVSLGVEYQHTFKAINQRNGERNNAFLTIGVHW</sequence>
<dbReference type="EMBL" id="L16945">
    <property type="protein sequence ID" value="AAC36849.1"/>
    <property type="molecule type" value="Unassigned_DNA"/>
</dbReference>
<dbReference type="EMBL" id="U82598">
    <property type="protein sequence ID" value="AAB40766.1"/>
    <property type="molecule type" value="Genomic_DNA"/>
</dbReference>
<dbReference type="EMBL" id="U00096">
    <property type="protein sequence ID" value="AAC73669.1"/>
    <property type="molecule type" value="Genomic_DNA"/>
</dbReference>
<dbReference type="EMBL" id="AP009048">
    <property type="protein sequence ID" value="BAA35202.1"/>
    <property type="molecule type" value="Genomic_DNA"/>
</dbReference>
<dbReference type="PIR" id="B49351">
    <property type="entry name" value="B49351"/>
</dbReference>
<dbReference type="RefSeq" id="NP_415100.1">
    <property type="nucleotide sequence ID" value="NC_000913.3"/>
</dbReference>
<dbReference type="RefSeq" id="WP_000662357.1">
    <property type="nucleotide sequence ID" value="NZ_LN832404.1"/>
</dbReference>
<dbReference type="BioGRID" id="4259890">
    <property type="interactions" value="203"/>
</dbReference>
<dbReference type="BioGRID" id="849145">
    <property type="interactions" value="1"/>
</dbReference>
<dbReference type="DIP" id="DIP-10332N"/>
<dbReference type="FunCoup" id="P31600">
    <property type="interactions" value="88"/>
</dbReference>
<dbReference type="IntAct" id="P31600">
    <property type="interactions" value="11"/>
</dbReference>
<dbReference type="STRING" id="511145.b0568"/>
<dbReference type="jPOST" id="P31600"/>
<dbReference type="PaxDb" id="511145-b0568"/>
<dbReference type="EnsemblBacteria" id="AAC73669">
    <property type="protein sequence ID" value="AAC73669"/>
    <property type="gene ID" value="b0568"/>
</dbReference>
<dbReference type="GeneID" id="944741"/>
<dbReference type="KEGG" id="ecj:JW0557"/>
<dbReference type="KEGG" id="eco:b0568"/>
<dbReference type="KEGG" id="ecoc:C3026_02820"/>
<dbReference type="PATRIC" id="fig|1411691.4.peg.1706"/>
<dbReference type="EchoBASE" id="EB1691"/>
<dbReference type="eggNOG" id="COG4783">
    <property type="taxonomic scope" value="Bacteria"/>
</dbReference>
<dbReference type="HOGENOM" id="CLU_012342_0_0_6"/>
<dbReference type="InParanoid" id="P31600"/>
<dbReference type="OMA" id="WDHALGE"/>
<dbReference type="OrthoDB" id="7312176at2"/>
<dbReference type="BioCyc" id="EcoCyc:EG11740-MONOMER"/>
<dbReference type="PRO" id="PR:P31600"/>
<dbReference type="Proteomes" id="UP000000625">
    <property type="component" value="Chromosome"/>
</dbReference>
<dbReference type="GO" id="GO:0009279">
    <property type="term" value="C:cell outer membrane"/>
    <property type="evidence" value="ECO:0000314"/>
    <property type="project" value="EcoCyc"/>
</dbReference>
<dbReference type="GO" id="GO:0046813">
    <property type="term" value="P:receptor-mediated virion attachment to host cell"/>
    <property type="evidence" value="ECO:0000315"/>
    <property type="project" value="EcoCyc"/>
</dbReference>
<dbReference type="GO" id="GO:0032940">
    <property type="term" value="P:secretion by cell"/>
    <property type="evidence" value="ECO:0000314"/>
    <property type="project" value="EcoCyc"/>
</dbReference>
<dbReference type="Gene3D" id="1.25.40.10">
    <property type="entry name" value="Tetratricopeptide repeat domain"/>
    <property type="match status" value="1"/>
</dbReference>
<dbReference type="InterPro" id="IPR025137">
    <property type="entry name" value="NfrA_C"/>
</dbReference>
<dbReference type="InterPro" id="IPR011990">
    <property type="entry name" value="TPR-like_helical_dom_sf"/>
</dbReference>
<dbReference type="InterPro" id="IPR019734">
    <property type="entry name" value="TPR_rpt"/>
</dbReference>
<dbReference type="InterPro" id="IPR050498">
    <property type="entry name" value="Ycf3"/>
</dbReference>
<dbReference type="NCBIfam" id="NF007302">
    <property type="entry name" value="PRK09782.1"/>
    <property type="match status" value="1"/>
</dbReference>
<dbReference type="PANTHER" id="PTHR44858">
    <property type="entry name" value="TETRATRICOPEPTIDE REPEAT PROTEIN 6"/>
    <property type="match status" value="1"/>
</dbReference>
<dbReference type="PANTHER" id="PTHR44858:SF1">
    <property type="entry name" value="UDP-N-ACETYLGLUCOSAMINE--PEPTIDE N-ACETYLGLUCOSAMINYLTRANSFERASE SPINDLY-RELATED"/>
    <property type="match status" value="1"/>
</dbReference>
<dbReference type="Pfam" id="PF13283">
    <property type="entry name" value="NfrA_C"/>
    <property type="match status" value="1"/>
</dbReference>
<dbReference type="Pfam" id="PF14559">
    <property type="entry name" value="TPR_19"/>
    <property type="match status" value="1"/>
</dbReference>
<dbReference type="SMART" id="SM00028">
    <property type="entry name" value="TPR"/>
    <property type="match status" value="2"/>
</dbReference>
<dbReference type="SUPFAM" id="SSF48452">
    <property type="entry name" value="TPR-like"/>
    <property type="match status" value="2"/>
</dbReference>
<dbReference type="PROSITE" id="PS50005">
    <property type="entry name" value="TPR"/>
    <property type="match status" value="3"/>
</dbReference>
<dbReference type="PROSITE" id="PS50293">
    <property type="entry name" value="TPR_REGION"/>
    <property type="match status" value="1"/>
</dbReference>
<gene>
    <name type="primary">nfrA</name>
    <name type="ordered locus">b0568</name>
    <name type="ordered locus">JW0557</name>
</gene>
<protein>
    <recommendedName>
        <fullName evidence="3">Bacteriophage adsorption protein A</fullName>
    </recommendedName>
    <alternativeName>
        <fullName>Bacteriophage N4 adsorption protein A</fullName>
    </alternativeName>
</protein>
<keyword id="KW-0998">Cell outer membrane</keyword>
<keyword id="KW-0472">Membrane</keyword>
<keyword id="KW-1185">Reference proteome</keyword>
<keyword id="KW-0677">Repeat</keyword>
<keyword id="KW-0732">Signal</keyword>
<keyword id="KW-0802">TPR repeat</keyword>
<feature type="signal peptide" evidence="1">
    <location>
        <begin position="1"/>
        <end position="27"/>
    </location>
</feature>
<feature type="chain" id="PRO_0000021809" description="Bacteriophage adsorption protein A">
    <location>
        <begin position="28"/>
        <end position="990"/>
    </location>
</feature>
<feature type="repeat" description="TPR 1">
    <location>
        <begin position="81"/>
        <end position="114"/>
    </location>
</feature>
<feature type="repeat" description="TPR 2">
    <location>
        <begin position="612"/>
        <end position="645"/>
    </location>
</feature>
<feature type="repeat" description="TPR 3">
    <location>
        <begin position="646"/>
        <end position="679"/>
    </location>
</feature>
<reference key="1">
    <citation type="journal article" date="1993" name="J. Bacteriol.">
        <title>Two overlapping genes encoding membrane proteins required for bacteriophage N4 adsorption.</title>
        <authorList>
            <person name="Kiino D.R."/>
            <person name="Singer M.S."/>
            <person name="Rothman-Denes L.B."/>
        </authorList>
    </citation>
    <scope>NUCLEOTIDE SEQUENCE [GENOMIC DNA]</scope>
    <source>
        <strain>K12</strain>
    </source>
</reference>
<reference key="2">
    <citation type="journal article" date="1996" name="DNA Res.">
        <title>A 718-kb DNA sequence of the Escherichia coli K-12 genome corresponding to the 12.7-28.0 min region on the linkage map.</title>
        <authorList>
            <person name="Oshima T."/>
            <person name="Aiba H."/>
            <person name="Baba T."/>
            <person name="Fujita K."/>
            <person name="Hayashi K."/>
            <person name="Honjo A."/>
            <person name="Ikemoto K."/>
            <person name="Inada T."/>
            <person name="Itoh T."/>
            <person name="Kajihara M."/>
            <person name="Kanai K."/>
            <person name="Kashimoto K."/>
            <person name="Kimura S."/>
            <person name="Kitagawa M."/>
            <person name="Makino K."/>
            <person name="Masuda S."/>
            <person name="Miki T."/>
            <person name="Mizobuchi K."/>
            <person name="Mori H."/>
            <person name="Motomura K."/>
            <person name="Nakamura Y."/>
            <person name="Nashimoto H."/>
            <person name="Nishio Y."/>
            <person name="Saito N."/>
            <person name="Sampei G."/>
            <person name="Seki Y."/>
            <person name="Tagami H."/>
            <person name="Takemoto K."/>
            <person name="Wada C."/>
            <person name="Yamamoto Y."/>
            <person name="Yano M."/>
            <person name="Horiuchi T."/>
        </authorList>
    </citation>
    <scope>NUCLEOTIDE SEQUENCE [LARGE SCALE GENOMIC DNA]</scope>
    <source>
        <strain>K12 / W3110 / ATCC 27325 / DSM 5911</strain>
    </source>
</reference>
<reference key="3">
    <citation type="submission" date="1997-01" db="EMBL/GenBank/DDBJ databases">
        <title>Sequence of minutes 4-25 of Escherichia coli.</title>
        <authorList>
            <person name="Chung E."/>
            <person name="Allen E."/>
            <person name="Araujo R."/>
            <person name="Aparicio A.M."/>
            <person name="Davis K."/>
            <person name="Duncan M."/>
            <person name="Federspiel N."/>
            <person name="Hyman R."/>
            <person name="Kalman S."/>
            <person name="Komp C."/>
            <person name="Kurdi O."/>
            <person name="Lew H."/>
            <person name="Lin D."/>
            <person name="Namath A."/>
            <person name="Oefner P."/>
            <person name="Roberts D."/>
            <person name="Schramm S."/>
            <person name="Davis R.W."/>
        </authorList>
    </citation>
    <scope>NUCLEOTIDE SEQUENCE [LARGE SCALE GENOMIC DNA]</scope>
    <source>
        <strain>K12 / MG1655 / ATCC 47076</strain>
    </source>
</reference>
<reference key="4">
    <citation type="journal article" date="1997" name="Science">
        <title>The complete genome sequence of Escherichia coli K-12.</title>
        <authorList>
            <person name="Blattner F.R."/>
            <person name="Plunkett G. III"/>
            <person name="Bloch C.A."/>
            <person name="Perna N.T."/>
            <person name="Burland V."/>
            <person name="Riley M."/>
            <person name="Collado-Vides J."/>
            <person name="Glasner J.D."/>
            <person name="Rode C.K."/>
            <person name="Mayhew G.F."/>
            <person name="Gregor J."/>
            <person name="Davis N.W."/>
            <person name="Kirkpatrick H.A."/>
            <person name="Goeden M.A."/>
            <person name="Rose D.J."/>
            <person name="Mau B."/>
            <person name="Shao Y."/>
        </authorList>
    </citation>
    <scope>NUCLEOTIDE SEQUENCE [LARGE SCALE GENOMIC DNA]</scope>
    <source>
        <strain>K12 / MG1655 / ATCC 47076</strain>
    </source>
</reference>
<reference key="5">
    <citation type="journal article" date="2006" name="Mol. Syst. Biol.">
        <title>Highly accurate genome sequences of Escherichia coli K-12 strains MG1655 and W3110.</title>
        <authorList>
            <person name="Hayashi K."/>
            <person name="Morooka N."/>
            <person name="Yamamoto Y."/>
            <person name="Fujita K."/>
            <person name="Isono K."/>
            <person name="Choi S."/>
            <person name="Ohtsubo E."/>
            <person name="Baba T."/>
            <person name="Wanner B.L."/>
            <person name="Mori H."/>
            <person name="Horiuchi T."/>
        </authorList>
    </citation>
    <scope>NUCLEOTIDE SEQUENCE [LARGE SCALE GENOMIC DNA]</scope>
    <source>
        <strain>K12 / W3110 / ATCC 27325 / DSM 5911</strain>
    </source>
</reference>
<reference key="6">
    <citation type="journal article" date="2009" name="J. Bacteriol.">
        <title>The tail sheath of bacteriophage N4 interacts with the Escherichia coli receptor.</title>
        <authorList>
            <person name="McPartland J."/>
            <person name="Rothman-Denes L.B."/>
        </authorList>
    </citation>
    <scope>INTERACTION WITH N4 PHAGE NON-CONTRACTILE SHEATH PROTEIN (MICROBIAL INFECTION)</scope>
    <scope>FUNCTION (MICROBIAL INFECTION)</scope>
</reference>
<name>NFRA_ECOLI</name>
<accession>P31600</accession>